<comment type="function">
    <text evidence="1">Ubiquitin-like protein which plays an important role in cell cycle control. Attachment of nedd8 to cullins activates their associated E3 ubiquitin ligase activity, and thus promotes polyubiquitination and proteasomal degradation of cyclins and other regulatory proteins (By similarity).</text>
</comment>
<comment type="subcellular location">
    <subcellularLocation>
        <location evidence="1">Nucleus</location>
    </subcellularLocation>
</comment>
<comment type="PTM">
    <text evidence="1">Cleavage of precursor form is necessary for function.</text>
</comment>
<comment type="similarity">
    <text evidence="4">Belongs to the ubiquitin family.</text>
</comment>
<feature type="chain" id="PRO_0000328672" description="Ubiquitin-like protein NEDD8">
    <location>
        <begin position="1"/>
        <end position="76"/>
    </location>
</feature>
<feature type="propeptide" id="PRO_0000328673" evidence="1">
    <location>
        <position position="77"/>
    </location>
</feature>
<feature type="region of interest" description="Disordered" evidence="3">
    <location>
        <begin position="30"/>
        <end position="57"/>
    </location>
</feature>
<feature type="region of interest" description="Interaction with ube1c" evidence="1">
    <location>
        <begin position="70"/>
        <end position="72"/>
    </location>
</feature>
<feature type="site" description="Interaction with ube1c" evidence="1">
    <location>
        <position position="8"/>
    </location>
</feature>
<feature type="site" description="Interaction with ube1c" evidence="1">
    <location>
        <position position="44"/>
    </location>
</feature>
<feature type="cross-link" description="Glycyl lysine isopeptide (Gly-Lys) (interchain with K-? in acceptor proteins)" evidence="2">
    <location>
        <position position="76"/>
    </location>
</feature>
<evidence type="ECO:0000250" key="1">
    <source>
        <dbReference type="UniProtKB" id="Q15843"/>
    </source>
</evidence>
<evidence type="ECO:0000255" key="2">
    <source>
        <dbReference type="PROSITE-ProRule" id="PRU00214"/>
    </source>
</evidence>
<evidence type="ECO:0000256" key="3">
    <source>
        <dbReference type="SAM" id="MobiDB-lite"/>
    </source>
</evidence>
<evidence type="ECO:0000305" key="4"/>
<protein>
    <recommendedName>
        <fullName>Ubiquitin-like protein NEDD8</fullName>
    </recommendedName>
    <alternativeName>
        <fullName>Neddylin</fullName>
    </alternativeName>
</protein>
<gene>
    <name type="primary">nedd8</name>
    <name type="ORF">DDB_G0278711</name>
</gene>
<accession>Q54XV3</accession>
<keyword id="KW-1017">Isopeptide bond</keyword>
<keyword id="KW-0539">Nucleus</keyword>
<keyword id="KW-1185">Reference proteome</keyword>
<keyword id="KW-0833">Ubl conjugation pathway</keyword>
<organism>
    <name type="scientific">Dictyostelium discoideum</name>
    <name type="common">Social amoeba</name>
    <dbReference type="NCBI Taxonomy" id="44689"/>
    <lineage>
        <taxon>Eukaryota</taxon>
        <taxon>Amoebozoa</taxon>
        <taxon>Evosea</taxon>
        <taxon>Eumycetozoa</taxon>
        <taxon>Dictyostelia</taxon>
        <taxon>Dictyosteliales</taxon>
        <taxon>Dictyosteliaceae</taxon>
        <taxon>Dictyostelium</taxon>
    </lineage>
</organism>
<reference key="1">
    <citation type="journal article" date="2005" name="Nature">
        <title>The genome of the social amoeba Dictyostelium discoideum.</title>
        <authorList>
            <person name="Eichinger L."/>
            <person name="Pachebat J.A."/>
            <person name="Gloeckner G."/>
            <person name="Rajandream M.A."/>
            <person name="Sucgang R."/>
            <person name="Berriman M."/>
            <person name="Song J."/>
            <person name="Olsen R."/>
            <person name="Szafranski K."/>
            <person name="Xu Q."/>
            <person name="Tunggal B."/>
            <person name="Kummerfeld S."/>
            <person name="Madera M."/>
            <person name="Konfortov B.A."/>
            <person name="Rivero F."/>
            <person name="Bankier A.T."/>
            <person name="Lehmann R."/>
            <person name="Hamlin N."/>
            <person name="Davies R."/>
            <person name="Gaudet P."/>
            <person name="Fey P."/>
            <person name="Pilcher K."/>
            <person name="Chen G."/>
            <person name="Saunders D."/>
            <person name="Sodergren E.J."/>
            <person name="Davis P."/>
            <person name="Kerhornou A."/>
            <person name="Nie X."/>
            <person name="Hall N."/>
            <person name="Anjard C."/>
            <person name="Hemphill L."/>
            <person name="Bason N."/>
            <person name="Farbrother P."/>
            <person name="Desany B."/>
            <person name="Just E."/>
            <person name="Morio T."/>
            <person name="Rost R."/>
            <person name="Churcher C.M."/>
            <person name="Cooper J."/>
            <person name="Haydock S."/>
            <person name="van Driessche N."/>
            <person name="Cronin A."/>
            <person name="Goodhead I."/>
            <person name="Muzny D.M."/>
            <person name="Mourier T."/>
            <person name="Pain A."/>
            <person name="Lu M."/>
            <person name="Harper D."/>
            <person name="Lindsay R."/>
            <person name="Hauser H."/>
            <person name="James K.D."/>
            <person name="Quiles M."/>
            <person name="Madan Babu M."/>
            <person name="Saito T."/>
            <person name="Buchrieser C."/>
            <person name="Wardroper A."/>
            <person name="Felder M."/>
            <person name="Thangavelu M."/>
            <person name="Johnson D."/>
            <person name="Knights A."/>
            <person name="Loulseged H."/>
            <person name="Mungall K.L."/>
            <person name="Oliver K."/>
            <person name="Price C."/>
            <person name="Quail M.A."/>
            <person name="Urushihara H."/>
            <person name="Hernandez J."/>
            <person name="Rabbinowitsch E."/>
            <person name="Steffen D."/>
            <person name="Sanders M."/>
            <person name="Ma J."/>
            <person name="Kohara Y."/>
            <person name="Sharp S."/>
            <person name="Simmonds M.N."/>
            <person name="Spiegler S."/>
            <person name="Tivey A."/>
            <person name="Sugano S."/>
            <person name="White B."/>
            <person name="Walker D."/>
            <person name="Woodward J.R."/>
            <person name="Winckler T."/>
            <person name="Tanaka Y."/>
            <person name="Shaulsky G."/>
            <person name="Schleicher M."/>
            <person name="Weinstock G.M."/>
            <person name="Rosenthal A."/>
            <person name="Cox E.C."/>
            <person name="Chisholm R.L."/>
            <person name="Gibbs R.A."/>
            <person name="Loomis W.F."/>
            <person name="Platzer M."/>
            <person name="Kay R.R."/>
            <person name="Williams J.G."/>
            <person name="Dear P.H."/>
            <person name="Noegel A.A."/>
            <person name="Barrell B.G."/>
            <person name="Kuspa A."/>
        </authorList>
    </citation>
    <scope>NUCLEOTIDE SEQUENCE [LARGE SCALE GENOMIC DNA]</scope>
    <source>
        <strain>AX4</strain>
    </source>
</reference>
<sequence length="77" mass="8515">MLIKVKTLTGKEIEIDIDPTDKIQRIKERVEEKEGIPPSQQRLIFGGKQMGDDKPASEYSIEGGSVLHLVLALRGGL</sequence>
<name>NEDD8_DICDI</name>
<proteinExistence type="inferred from homology"/>
<dbReference type="EMBL" id="AAFI02000023">
    <property type="protein sequence ID" value="EAL68528.2"/>
    <property type="molecule type" value="Genomic_DNA"/>
</dbReference>
<dbReference type="RefSeq" id="XP_642449.2">
    <property type="nucleotide sequence ID" value="XM_637357.2"/>
</dbReference>
<dbReference type="SMR" id="Q54XV3"/>
<dbReference type="FunCoup" id="Q54XV3">
    <property type="interactions" value="637"/>
</dbReference>
<dbReference type="STRING" id="44689.Q54XV3"/>
<dbReference type="PaxDb" id="44689-DDB0238041"/>
<dbReference type="EnsemblProtists" id="EAL68528">
    <property type="protein sequence ID" value="EAL68528"/>
    <property type="gene ID" value="DDB_G0278711"/>
</dbReference>
<dbReference type="GeneID" id="8621655"/>
<dbReference type="KEGG" id="ddi:DDB_G0278711"/>
<dbReference type="dictyBase" id="DDB_G0278711">
    <property type="gene designation" value="nedd8"/>
</dbReference>
<dbReference type="VEuPathDB" id="AmoebaDB:DDB_G0278711"/>
<dbReference type="eggNOG" id="KOG0005">
    <property type="taxonomic scope" value="Eukaryota"/>
</dbReference>
<dbReference type="HOGENOM" id="CLU_010412_6_4_1"/>
<dbReference type="InParanoid" id="Q54XV3"/>
<dbReference type="OMA" id="YAGKQMA"/>
<dbReference type="PhylomeDB" id="Q54XV3"/>
<dbReference type="Reactome" id="R-DDI-5689603">
    <property type="pathway name" value="UCH proteinases"/>
</dbReference>
<dbReference type="Reactome" id="R-DDI-8856825">
    <property type="pathway name" value="Cargo recognition for clathrin-mediated endocytosis"/>
</dbReference>
<dbReference type="Reactome" id="R-DDI-8951664">
    <property type="pathway name" value="Neddylation"/>
</dbReference>
<dbReference type="Reactome" id="R-DDI-917937">
    <property type="pathway name" value="Iron uptake and transport"/>
</dbReference>
<dbReference type="PRO" id="PR:Q54XV3"/>
<dbReference type="Proteomes" id="UP000002195">
    <property type="component" value="Chromosome 3"/>
</dbReference>
<dbReference type="GO" id="GO:0005737">
    <property type="term" value="C:cytoplasm"/>
    <property type="evidence" value="ECO:0000318"/>
    <property type="project" value="GO_Central"/>
</dbReference>
<dbReference type="GO" id="GO:0005829">
    <property type="term" value="C:cytosol"/>
    <property type="evidence" value="ECO:0000250"/>
    <property type="project" value="dictyBase"/>
</dbReference>
<dbReference type="GO" id="GO:0005634">
    <property type="term" value="C:nucleus"/>
    <property type="evidence" value="ECO:0000250"/>
    <property type="project" value="UniProtKB"/>
</dbReference>
<dbReference type="GO" id="GO:0019005">
    <property type="term" value="C:SCF ubiquitin ligase complex"/>
    <property type="evidence" value="ECO:0000250"/>
    <property type="project" value="dictyBase"/>
</dbReference>
<dbReference type="GO" id="GO:0097602">
    <property type="term" value="F:cullin family protein binding"/>
    <property type="evidence" value="ECO:0000353"/>
    <property type="project" value="dictyBase"/>
</dbReference>
<dbReference type="GO" id="GO:0031386">
    <property type="term" value="F:protein tag activity"/>
    <property type="evidence" value="ECO:0000318"/>
    <property type="project" value="GO_Central"/>
</dbReference>
<dbReference type="GO" id="GO:0031625">
    <property type="term" value="F:ubiquitin protein ligase binding"/>
    <property type="evidence" value="ECO:0000318"/>
    <property type="project" value="GO_Central"/>
</dbReference>
<dbReference type="GO" id="GO:0008283">
    <property type="term" value="P:cell population proliferation"/>
    <property type="evidence" value="ECO:0000250"/>
    <property type="project" value="UniProtKB"/>
</dbReference>
<dbReference type="GO" id="GO:0019941">
    <property type="term" value="P:modification-dependent protein catabolic process"/>
    <property type="evidence" value="ECO:0000318"/>
    <property type="project" value="GO_Central"/>
</dbReference>
<dbReference type="GO" id="GO:0045116">
    <property type="term" value="P:protein neddylation"/>
    <property type="evidence" value="ECO:0000250"/>
    <property type="project" value="dictyBase"/>
</dbReference>
<dbReference type="GO" id="GO:0031647">
    <property type="term" value="P:regulation of protein stability"/>
    <property type="evidence" value="ECO:0000250"/>
    <property type="project" value="UniProtKB"/>
</dbReference>
<dbReference type="GO" id="GO:0030162">
    <property type="term" value="P:regulation of proteolysis"/>
    <property type="evidence" value="ECO:0000250"/>
    <property type="project" value="UniProtKB"/>
</dbReference>
<dbReference type="GO" id="GO:0051438">
    <property type="term" value="P:regulation of ubiquitin-protein transferase activity"/>
    <property type="evidence" value="ECO:0000250"/>
    <property type="project" value="UniProtKB"/>
</dbReference>
<dbReference type="CDD" id="cd01806">
    <property type="entry name" value="Ubl_NEDD8"/>
    <property type="match status" value="1"/>
</dbReference>
<dbReference type="FunFam" id="3.10.20.90:FF:000023">
    <property type="entry name" value="NEDD8 protein"/>
    <property type="match status" value="1"/>
</dbReference>
<dbReference type="Gene3D" id="3.10.20.90">
    <property type="entry name" value="Phosphatidylinositol 3-kinase Catalytic Subunit, Chain A, domain 1"/>
    <property type="match status" value="1"/>
</dbReference>
<dbReference type="InterPro" id="IPR038738">
    <property type="entry name" value="Nedd8-like"/>
</dbReference>
<dbReference type="InterPro" id="IPR000626">
    <property type="entry name" value="Ubiquitin-like_dom"/>
</dbReference>
<dbReference type="InterPro" id="IPR029071">
    <property type="entry name" value="Ubiquitin-like_domsf"/>
</dbReference>
<dbReference type="InterPro" id="IPR019954">
    <property type="entry name" value="Ubiquitin_CS"/>
</dbReference>
<dbReference type="InterPro" id="IPR019956">
    <property type="entry name" value="Ubiquitin_dom"/>
</dbReference>
<dbReference type="InterPro" id="IPR050158">
    <property type="entry name" value="Ubiquitin_ubiquitin-like"/>
</dbReference>
<dbReference type="PANTHER" id="PTHR10666">
    <property type="entry name" value="UBIQUITIN"/>
    <property type="match status" value="1"/>
</dbReference>
<dbReference type="Pfam" id="PF00240">
    <property type="entry name" value="ubiquitin"/>
    <property type="match status" value="1"/>
</dbReference>
<dbReference type="PRINTS" id="PR00348">
    <property type="entry name" value="UBIQUITIN"/>
</dbReference>
<dbReference type="SMART" id="SM00213">
    <property type="entry name" value="UBQ"/>
    <property type="match status" value="1"/>
</dbReference>
<dbReference type="SUPFAM" id="SSF54236">
    <property type="entry name" value="Ubiquitin-like"/>
    <property type="match status" value="1"/>
</dbReference>
<dbReference type="PROSITE" id="PS00299">
    <property type="entry name" value="UBIQUITIN_1"/>
    <property type="match status" value="1"/>
</dbReference>
<dbReference type="PROSITE" id="PS50053">
    <property type="entry name" value="UBIQUITIN_2"/>
    <property type="match status" value="1"/>
</dbReference>